<name>LEF11_NPVMC</name>
<feature type="chain" id="PRO_0000132839" description="Late expression factor 11">
    <location>
        <begin position="1"/>
        <end position="120"/>
    </location>
</feature>
<keyword id="KW-0804">Transcription</keyword>
<keyword id="KW-0805">Transcription regulation</keyword>
<proteinExistence type="inferred from homology"/>
<accession>Q8QL85</accession>
<dbReference type="EMBL" id="U59461">
    <property type="protein sequence ID" value="AAM09257.1"/>
    <property type="molecule type" value="Genomic_DNA"/>
</dbReference>
<dbReference type="RefSeq" id="NP_613232.1">
    <property type="nucleotide sequence ID" value="NC_003529.1"/>
</dbReference>
<dbReference type="GeneID" id="935841"/>
<dbReference type="KEGG" id="vg:935841"/>
<dbReference type="Proteomes" id="UP000202529">
    <property type="component" value="Genome"/>
</dbReference>
<dbReference type="GO" id="GO:0006355">
    <property type="term" value="P:regulation of DNA-templated transcription"/>
    <property type="evidence" value="ECO:0007669"/>
    <property type="project" value="InterPro"/>
</dbReference>
<dbReference type="GO" id="GO:0019058">
    <property type="term" value="P:viral life cycle"/>
    <property type="evidence" value="ECO:0007669"/>
    <property type="project" value="InterPro"/>
</dbReference>
<dbReference type="InterPro" id="IPR009429">
    <property type="entry name" value="Baculo_LEF-11"/>
</dbReference>
<dbReference type="Pfam" id="PF06385">
    <property type="entry name" value="Baculo_LEF-11"/>
    <property type="match status" value="1"/>
</dbReference>
<evidence type="ECO:0000250" key="1"/>
<evidence type="ECO:0000305" key="2"/>
<gene>
    <name type="primary">LEF-11</name>
</gene>
<protein>
    <recommendedName>
        <fullName>Late expression factor 11</fullName>
    </recommendedName>
</protein>
<comment type="function">
    <text evidence="1">Involved in late/very late gene activation.</text>
</comment>
<comment type="similarity">
    <text evidence="2">Belongs to the baculoviridae LEF-11 family.</text>
</comment>
<sequence length="120" mass="13998">MDEPRPEAANVDSQQNSQCCLTRSEVYALVREVINKRKHHNLVTNVCDHVFDDGFEEQLKYIRANIDKALITVGGEHKHCKRLAAHIKKINKIFKLNKSLETEYKQSIDRYGSNRFNRNN</sequence>
<reference key="1">
    <citation type="journal article" date="2002" name="Virology">
        <title>Sequence and organization of the Mamestra configurata nucleopolyhedrovirus genome.</title>
        <authorList>
            <person name="Li Q."/>
            <person name="Donly C."/>
            <person name="Li L."/>
            <person name="Willis L.G."/>
            <person name="Theilmann D.A."/>
            <person name="Erlandson M."/>
        </authorList>
    </citation>
    <scope>NUCLEOTIDE SEQUENCE [LARGE SCALE GENOMIC DNA]</scope>
    <source>
        <strain>90/2</strain>
    </source>
</reference>
<organism>
    <name type="scientific">Mamestra configurata nucleopolyhedrovirus</name>
    <name type="common">MacoNPV</name>
    <dbReference type="NCBI Taxonomy" id="207830"/>
    <lineage>
        <taxon>Viruses</taxon>
        <taxon>Viruses incertae sedis</taxon>
        <taxon>Naldaviricetes</taxon>
        <taxon>Lefavirales</taxon>
        <taxon>Baculoviridae</taxon>
        <taxon>Alphabaculovirus</taxon>
        <taxon>Alphabaculovirus maconfiguratae</taxon>
    </lineage>
</organism>
<organismHost>
    <name type="scientific">Mamestra configurata</name>
    <name type="common">bertha armyworm</name>
    <dbReference type="NCBI Taxonomy" id="174822"/>
</organismHost>